<evidence type="ECO:0000250" key="1">
    <source>
        <dbReference type="UniProtKB" id="A8MW92"/>
    </source>
</evidence>
<evidence type="ECO:0000256" key="2">
    <source>
        <dbReference type="SAM" id="MobiDB-lite"/>
    </source>
</evidence>
<evidence type="ECO:0000269" key="3">
    <source>
    </source>
</evidence>
<evidence type="ECO:0000303" key="4">
    <source>
    </source>
</evidence>
<evidence type="ECO:0000303" key="5">
    <source>
    </source>
</evidence>
<evidence type="ECO:0000305" key="6"/>
<evidence type="ECO:0007744" key="7">
    <source>
    </source>
</evidence>
<comment type="function">
    <text evidence="1 3">Is a negative regulator of proteasomal degradation of a set of methylated proteins, including DNMT1 and SOX2 (By similarity). Involved in the maintainance of embryonic stem cells pluripotency, through the regulation of SOX2 levels (PubMed:29358331).</text>
</comment>
<comment type="subunit">
    <text evidence="3">Interacts with methylated DNMT1 (DNMT1K142me1). Interacts with SOX2.</text>
</comment>
<comment type="subcellular location">
    <subcellularLocation>
        <location evidence="1">Nucleus</location>
    </subcellularLocation>
    <text evidence="1">Localized to the perinucleolar region.</text>
</comment>
<comment type="alternative products">
    <event type="alternative splicing"/>
    <isoform>
        <id>Q8CCJ9-6</id>
        <name>6</name>
        <sequence type="displayed"/>
    </isoform>
    <isoform>
        <id>Q8CCJ9-1</id>
        <name>1</name>
        <sequence type="described" ref="VSP_040411 VSP_040412 VSP_040413"/>
    </isoform>
    <isoform>
        <id>Q8CCJ9-2</id>
        <name>2</name>
        <sequence type="described" ref="VSP_033788 VSP_033789"/>
    </isoform>
    <isoform>
        <id>Q8CCJ9-3</id>
        <name>3</name>
        <sequence type="described" ref="VSP_040412 VSP_040413"/>
    </isoform>
    <isoform>
        <id>Q8CCJ9-4</id>
        <name>4</name>
        <sequence type="described" ref="VSP_033790 VSP_040414"/>
    </isoform>
    <isoform>
        <id>Q8CCJ9-5</id>
        <name>5</name>
        <sequence type="described" ref="VSP_033785 VSP_033786"/>
    </isoform>
    <isoform>
        <id>Q8CCJ9-7</id>
        <name>7</name>
        <sequence type="described" ref="VSP_040409"/>
    </isoform>
    <isoform>
        <id>Q8CCJ9-8</id>
        <name>8</name>
        <sequence type="described" ref="VSP_040410"/>
    </isoform>
</comment>
<comment type="sequence caution" evidence="6">
    <conflict type="erroneous initiation">
        <sequence resource="EMBL-CDS" id="BAC30733"/>
    </conflict>
    <text>Truncated N-terminus.</text>
</comment>
<comment type="sequence caution" evidence="6">
    <conflict type="erroneous initiation">
        <sequence resource="EMBL-CDS" id="BAC32830"/>
    </conflict>
    <text>Truncated N-terminus.</text>
</comment>
<accession>Q8CCJ9</accession>
<accession>A6H5Y9</accession>
<accession>Q80UN6</accession>
<accession>Q8BPP8</accession>
<accession>Q8BQQ6</accession>
<accession>Q8BS11</accession>
<accession>Q8C8H9</accession>
<keyword id="KW-0007">Acetylation</keyword>
<keyword id="KW-0025">Alternative splicing</keyword>
<keyword id="KW-1017">Isopeptide bond</keyword>
<keyword id="KW-0479">Metal-binding</keyword>
<keyword id="KW-0539">Nucleus</keyword>
<keyword id="KW-0597">Phosphoprotein</keyword>
<keyword id="KW-1185">Reference proteome</keyword>
<keyword id="KW-0677">Repeat</keyword>
<keyword id="KW-0832">Ubl conjugation</keyword>
<keyword id="KW-0862">Zinc</keyword>
<keyword id="KW-0863">Zinc-finger</keyword>
<feature type="chain" id="PRO_0000336002" description="PHD finger protein 20-like protein 1">
    <location>
        <begin position="1"/>
        <end position="1013"/>
    </location>
</feature>
<feature type="domain" description="Tudor 1">
    <location>
        <begin position="11"/>
        <end position="71"/>
    </location>
</feature>
<feature type="domain" description="Tudor 2">
    <location>
        <begin position="85"/>
        <end position="141"/>
    </location>
</feature>
<feature type="zinc finger region" description="PHD-type">
    <location>
        <begin position="681"/>
        <end position="729"/>
    </location>
</feature>
<feature type="region of interest" description="Disordered" evidence="2">
    <location>
        <begin position="183"/>
        <end position="206"/>
    </location>
</feature>
<feature type="region of interest" description="Disordered" evidence="2">
    <location>
        <begin position="309"/>
        <end position="368"/>
    </location>
</feature>
<feature type="region of interest" description="Disordered" evidence="2">
    <location>
        <begin position="389"/>
        <end position="454"/>
    </location>
</feature>
<feature type="region of interest" description="Disordered" evidence="2">
    <location>
        <begin position="482"/>
        <end position="511"/>
    </location>
</feature>
<feature type="region of interest" description="Disordered" evidence="2">
    <location>
        <begin position="533"/>
        <end position="585"/>
    </location>
</feature>
<feature type="region of interest" description="Disordered" evidence="2">
    <location>
        <begin position="824"/>
        <end position="911"/>
    </location>
</feature>
<feature type="compositionally biased region" description="Polar residues" evidence="2">
    <location>
        <begin position="315"/>
        <end position="346"/>
    </location>
</feature>
<feature type="compositionally biased region" description="Basic residues" evidence="2">
    <location>
        <begin position="404"/>
        <end position="415"/>
    </location>
</feature>
<feature type="compositionally biased region" description="Low complexity" evidence="2">
    <location>
        <begin position="443"/>
        <end position="453"/>
    </location>
</feature>
<feature type="compositionally biased region" description="Basic and acidic residues" evidence="2">
    <location>
        <begin position="496"/>
        <end position="505"/>
    </location>
</feature>
<feature type="compositionally biased region" description="Basic and acidic residues" evidence="2">
    <location>
        <begin position="533"/>
        <end position="565"/>
    </location>
</feature>
<feature type="compositionally biased region" description="Basic residues" evidence="2">
    <location>
        <begin position="566"/>
        <end position="579"/>
    </location>
</feature>
<feature type="compositionally biased region" description="Basic and acidic residues" evidence="2">
    <location>
        <begin position="824"/>
        <end position="852"/>
    </location>
</feature>
<feature type="compositionally biased region" description="Polar residues" evidence="2">
    <location>
        <begin position="854"/>
        <end position="878"/>
    </location>
</feature>
<feature type="compositionally biased region" description="Acidic residues" evidence="2">
    <location>
        <begin position="879"/>
        <end position="892"/>
    </location>
</feature>
<feature type="modified residue" description="Phosphoserine" evidence="7">
    <location>
        <position position="368"/>
    </location>
</feature>
<feature type="modified residue" description="Phosphoserine" evidence="1">
    <location>
        <position position="432"/>
    </location>
</feature>
<feature type="modified residue" description="N6-acetyllysine" evidence="1">
    <location>
        <position position="905"/>
    </location>
</feature>
<feature type="cross-link" description="Glycyl lysine isopeptide (Lys-Gly) (interchain with G-Cter in SUMO2)" evidence="1">
    <location>
        <position position="75"/>
    </location>
</feature>
<feature type="cross-link" description="Glycyl lysine isopeptide (Lys-Gly) (interchain with G-Cter in SUMO2)" evidence="1">
    <location>
        <position position="79"/>
    </location>
</feature>
<feature type="cross-link" description="Glycyl lysine isopeptide (Lys-Gly) (interchain with G-Cter in SUMO2)" evidence="1">
    <location>
        <position position="530"/>
    </location>
</feature>
<feature type="splice variant" id="VSP_040409" description="In isoform 7." evidence="5">
    <location>
        <begin position="1"/>
        <end position="749"/>
    </location>
</feature>
<feature type="splice variant" id="VSP_040410" description="In isoform 8." evidence="5">
    <location>
        <begin position="1"/>
        <end position="694"/>
    </location>
</feature>
<feature type="splice variant" id="VSP_033785" description="In isoform 5." evidence="4">
    <original>DFK</original>
    <variation>LFE</variation>
    <location>
        <begin position="86"/>
        <end position="88"/>
    </location>
</feature>
<feature type="splice variant" id="VSP_033786" description="In isoform 5." evidence="4">
    <location>
        <begin position="89"/>
        <end position="1013"/>
    </location>
</feature>
<feature type="splice variant" id="VSP_040411" description="In isoform 1." evidence="5">
    <original>Q</original>
    <variation>QFLFQ</variation>
    <location>
        <position position="143"/>
    </location>
</feature>
<feature type="splice variant" id="VSP_033788" description="In isoform 2." evidence="5">
    <original>A</original>
    <variation>V</variation>
    <location>
        <position position="311"/>
    </location>
</feature>
<feature type="splice variant" id="VSP_033789" description="In isoform 2." evidence="5">
    <location>
        <begin position="312"/>
        <end position="1013"/>
    </location>
</feature>
<feature type="splice variant" id="VSP_040412" description="In isoform 1 and isoform 3." evidence="4 5">
    <original>KRKE</original>
    <variation>MDRK</variation>
    <location>
        <begin position="547"/>
        <end position="550"/>
    </location>
</feature>
<feature type="splice variant" id="VSP_040413" description="In isoform 1 and isoform 3." evidence="4 5">
    <location>
        <begin position="551"/>
        <end position="1013"/>
    </location>
</feature>
<feature type="splice variant" id="VSP_033790" description="In isoform 4." evidence="5">
    <original>QRWSAKYRY</original>
    <variation>EALRPVWVV</variation>
    <location>
        <begin position="732"/>
        <end position="740"/>
    </location>
</feature>
<feature type="splice variant" id="VSP_040414" description="In isoform 4." evidence="5">
    <location>
        <begin position="741"/>
        <end position="1013"/>
    </location>
</feature>
<feature type="sequence conflict" description="In Ref. 2; BAC32946." evidence="6" ref="2">
    <original>A</original>
    <variation>G</variation>
    <location>
        <position position="95"/>
    </location>
</feature>
<name>P20L1_MOUSE</name>
<sequence length="1013" mass="113860">MSKKPPNRPGITFEIGARLEALDYLQKWYPSRIEKIDYEEGKMLVHFERWSHRYDEWIYWDSNRLRPLERPALRKEGLKDEEELFDFKAGEEVLARWTDCRYYPAKIEAINKEGTFTVQFYDGVIRCLKRMHIKAMPEDAKGQVKSQHPLSWCCPIDPAGSCNQSMGSEDWIALVKAAAAAAAKNKTGTKPRASANSNKEKERDGGKWFKLPSKKAETSTCIVTAEIEKKEELPTSSETFGLHIDTVPKIVFPQPESTLTNKRKNNQGNSFQAKRARLNKITGLLASKAVGVDGAERKEDCSATAPVLEQAISPKPQSQKKNEAVISSSANTQKPALLSSTLSSGKARSKKCKHESGESSGCIKTPKSPLAPELIQAKDLTLVSQLSSVINKTSSPQPVNPPRPCKHSERRRRSQRLATLPMPDDSLEKLSSSSSATDGKAFSISSQNQQQSSVPEVPAIAYVPLQKLGPCLPLDLSCGSEVTGSRTPHPSYHGGECPREEKEETPLFANPTSKVVSDVKGAAAATGISKTEKKVKLEEKTSTAFGKRKEKDKEKKEKRDKDHYKPKQKKKKKKKKKSKQHDYSDYEDSSLDFLERCSSPLTRSSGSSLAPRSTFTEKTTTYQYPRAILSVDLSGENLSDVEFLDDSSTESLLLSGDEYNQDFDSTNFEESQDEDDALNEIVRCICELDEENGFMIQCEECLCWQHSVCMGLLEDSIPEQYICYICRDPPGQRWSAKYRYDKEWLNNGRMYGLSFLKENYSHLNAKKIVSTHHLLADVYGVTEVLHGLQLKIGILKNKHHPDLHLWAYSGKRKDQDQAVAEAERKITPQDRANSEGKECVQNHKEPALRMEETYITSEHSYQKPQSFSQDCQSLTDPGSSDDDDASSFEEDGELRVPDKSHLLYKNRGVSEKNPASGNKVFVYNDKKGTEGPGDSHLQWQLNLLTHIENVQNEVTSRMDLIEKEVDVLESWLDFTGELEPPDPLARLPQLKRHLKQLLLDVGKVQQIATLCSV</sequence>
<gene>
    <name type="primary">Phf20l1</name>
</gene>
<proteinExistence type="evidence at protein level"/>
<reference key="1">
    <citation type="journal article" date="2005" name="Science">
        <title>The transcriptional landscape of the mammalian genome.</title>
        <authorList>
            <person name="Carninci P."/>
            <person name="Kasukawa T."/>
            <person name="Katayama S."/>
            <person name="Gough J."/>
            <person name="Frith M.C."/>
            <person name="Maeda N."/>
            <person name="Oyama R."/>
            <person name="Ravasi T."/>
            <person name="Lenhard B."/>
            <person name="Wells C."/>
            <person name="Kodzius R."/>
            <person name="Shimokawa K."/>
            <person name="Bajic V.B."/>
            <person name="Brenner S.E."/>
            <person name="Batalov S."/>
            <person name="Forrest A.R."/>
            <person name="Zavolan M."/>
            <person name="Davis M.J."/>
            <person name="Wilming L.G."/>
            <person name="Aidinis V."/>
            <person name="Allen J.E."/>
            <person name="Ambesi-Impiombato A."/>
            <person name="Apweiler R."/>
            <person name="Aturaliya R.N."/>
            <person name="Bailey T.L."/>
            <person name="Bansal M."/>
            <person name="Baxter L."/>
            <person name="Beisel K.W."/>
            <person name="Bersano T."/>
            <person name="Bono H."/>
            <person name="Chalk A.M."/>
            <person name="Chiu K.P."/>
            <person name="Choudhary V."/>
            <person name="Christoffels A."/>
            <person name="Clutterbuck D.R."/>
            <person name="Crowe M.L."/>
            <person name="Dalla E."/>
            <person name="Dalrymple B.P."/>
            <person name="de Bono B."/>
            <person name="Della Gatta G."/>
            <person name="di Bernardo D."/>
            <person name="Down T."/>
            <person name="Engstrom P."/>
            <person name="Fagiolini M."/>
            <person name="Faulkner G."/>
            <person name="Fletcher C.F."/>
            <person name="Fukushima T."/>
            <person name="Furuno M."/>
            <person name="Futaki S."/>
            <person name="Gariboldi M."/>
            <person name="Georgii-Hemming P."/>
            <person name="Gingeras T.R."/>
            <person name="Gojobori T."/>
            <person name="Green R.E."/>
            <person name="Gustincich S."/>
            <person name="Harbers M."/>
            <person name="Hayashi Y."/>
            <person name="Hensch T.K."/>
            <person name="Hirokawa N."/>
            <person name="Hill D."/>
            <person name="Huminiecki L."/>
            <person name="Iacono M."/>
            <person name="Ikeo K."/>
            <person name="Iwama A."/>
            <person name="Ishikawa T."/>
            <person name="Jakt M."/>
            <person name="Kanapin A."/>
            <person name="Katoh M."/>
            <person name="Kawasawa Y."/>
            <person name="Kelso J."/>
            <person name="Kitamura H."/>
            <person name="Kitano H."/>
            <person name="Kollias G."/>
            <person name="Krishnan S.P."/>
            <person name="Kruger A."/>
            <person name="Kummerfeld S.K."/>
            <person name="Kurochkin I.V."/>
            <person name="Lareau L.F."/>
            <person name="Lazarevic D."/>
            <person name="Lipovich L."/>
            <person name="Liu J."/>
            <person name="Liuni S."/>
            <person name="McWilliam S."/>
            <person name="Madan Babu M."/>
            <person name="Madera M."/>
            <person name="Marchionni L."/>
            <person name="Matsuda H."/>
            <person name="Matsuzawa S."/>
            <person name="Miki H."/>
            <person name="Mignone F."/>
            <person name="Miyake S."/>
            <person name="Morris K."/>
            <person name="Mottagui-Tabar S."/>
            <person name="Mulder N."/>
            <person name="Nakano N."/>
            <person name="Nakauchi H."/>
            <person name="Ng P."/>
            <person name="Nilsson R."/>
            <person name="Nishiguchi S."/>
            <person name="Nishikawa S."/>
            <person name="Nori F."/>
            <person name="Ohara O."/>
            <person name="Okazaki Y."/>
            <person name="Orlando V."/>
            <person name="Pang K.C."/>
            <person name="Pavan W.J."/>
            <person name="Pavesi G."/>
            <person name="Pesole G."/>
            <person name="Petrovsky N."/>
            <person name="Piazza S."/>
            <person name="Reed J."/>
            <person name="Reid J.F."/>
            <person name="Ring B.Z."/>
            <person name="Ringwald M."/>
            <person name="Rost B."/>
            <person name="Ruan Y."/>
            <person name="Salzberg S.L."/>
            <person name="Sandelin A."/>
            <person name="Schneider C."/>
            <person name="Schoenbach C."/>
            <person name="Sekiguchi K."/>
            <person name="Semple C.A."/>
            <person name="Seno S."/>
            <person name="Sessa L."/>
            <person name="Sheng Y."/>
            <person name="Shibata Y."/>
            <person name="Shimada H."/>
            <person name="Shimada K."/>
            <person name="Silva D."/>
            <person name="Sinclair B."/>
            <person name="Sperling S."/>
            <person name="Stupka E."/>
            <person name="Sugiura K."/>
            <person name="Sultana R."/>
            <person name="Takenaka Y."/>
            <person name="Taki K."/>
            <person name="Tammoja K."/>
            <person name="Tan S.L."/>
            <person name="Tang S."/>
            <person name="Taylor M.S."/>
            <person name="Tegner J."/>
            <person name="Teichmann S.A."/>
            <person name="Ueda H.R."/>
            <person name="van Nimwegen E."/>
            <person name="Verardo R."/>
            <person name="Wei C.L."/>
            <person name="Yagi K."/>
            <person name="Yamanishi H."/>
            <person name="Zabarovsky E."/>
            <person name="Zhu S."/>
            <person name="Zimmer A."/>
            <person name="Hide W."/>
            <person name="Bult C."/>
            <person name="Grimmond S.M."/>
            <person name="Teasdale R.D."/>
            <person name="Liu E.T."/>
            <person name="Brusic V."/>
            <person name="Quackenbush J."/>
            <person name="Wahlestedt C."/>
            <person name="Mattick J.S."/>
            <person name="Hume D.A."/>
            <person name="Kai C."/>
            <person name="Sasaki D."/>
            <person name="Tomaru Y."/>
            <person name="Fukuda S."/>
            <person name="Kanamori-Katayama M."/>
            <person name="Suzuki M."/>
            <person name="Aoki J."/>
            <person name="Arakawa T."/>
            <person name="Iida J."/>
            <person name="Imamura K."/>
            <person name="Itoh M."/>
            <person name="Kato T."/>
            <person name="Kawaji H."/>
            <person name="Kawagashira N."/>
            <person name="Kawashima T."/>
            <person name="Kojima M."/>
            <person name="Kondo S."/>
            <person name="Konno H."/>
            <person name="Nakano K."/>
            <person name="Ninomiya N."/>
            <person name="Nishio T."/>
            <person name="Okada M."/>
            <person name="Plessy C."/>
            <person name="Shibata K."/>
            <person name="Shiraki T."/>
            <person name="Suzuki S."/>
            <person name="Tagami M."/>
            <person name="Waki K."/>
            <person name="Watahiki A."/>
            <person name="Okamura-Oho Y."/>
            <person name="Suzuki H."/>
            <person name="Kawai J."/>
            <person name="Hayashizaki Y."/>
        </authorList>
    </citation>
    <scope>NUCLEOTIDE SEQUENCE [LARGE SCALE MRNA] (ISOFORMS 1; 2; 4; 7 AND 8)</scope>
    <source>
        <strain>C57BL/6J</strain>
        <tissue>Aorta</tissue>
        <tissue>Cerebellum</tissue>
        <tissue>Vein</tissue>
    </source>
</reference>
<reference key="2">
    <citation type="journal article" date="2004" name="Genome Res.">
        <title>The status, quality, and expansion of the NIH full-length cDNA project: the Mammalian Gene Collection (MGC).</title>
        <authorList>
            <consortium name="The MGC Project Team"/>
        </authorList>
    </citation>
    <scope>NUCLEOTIDE SEQUENCE [LARGE SCALE MRNA] (ISOFORMS 3 AND 5)</scope>
    <source>
        <strain>Czech II</strain>
        <tissue>Brain</tissue>
        <tissue>Mammary tumor</tissue>
    </source>
</reference>
<reference key="3">
    <citation type="journal article" date="2010" name="Cell">
        <title>A tissue-specific atlas of mouse protein phosphorylation and expression.</title>
        <authorList>
            <person name="Huttlin E.L."/>
            <person name="Jedrychowski M.P."/>
            <person name="Elias J.E."/>
            <person name="Goswami T."/>
            <person name="Rad R."/>
            <person name="Beausoleil S.A."/>
            <person name="Villen J."/>
            <person name="Haas W."/>
            <person name="Sowa M.E."/>
            <person name="Gygi S.P."/>
        </authorList>
    </citation>
    <scope>PHOSPHORYLATION [LARGE SCALE ANALYSIS] AT SER-368</scope>
    <scope>IDENTIFICATION BY MASS SPECTROMETRY [LARGE SCALE ANALYSIS]</scope>
    <source>
        <tissue>Spleen</tissue>
    </source>
</reference>
<reference key="4">
    <citation type="journal article" date="2018" name="J. Biol. Chem.">
        <title>LSD1 demethylase and the methyl-binding protein PHF20L1 prevent SET7 methyltransferase-dependent proteolysis of the stem-cell protein SOX2.</title>
        <authorList>
            <person name="Zhang C."/>
            <person name="Hoang N."/>
            <person name="Leng F."/>
            <person name="Saxena L."/>
            <person name="Lee L."/>
            <person name="Alejo S."/>
            <person name="Qi D."/>
            <person name="Khal A."/>
            <person name="Sun H."/>
            <person name="Lu F."/>
            <person name="Zhang H."/>
        </authorList>
    </citation>
    <scope>FUNCTION</scope>
    <scope>INTERACTION WITH SOX2</scope>
</reference>
<protein>
    <recommendedName>
        <fullName>PHD finger protein 20-like protein 1</fullName>
    </recommendedName>
</protein>
<dbReference type="EMBL" id="AK032638">
    <property type="protein sequence ID" value="BAC27964.1"/>
    <property type="molecule type" value="mRNA"/>
</dbReference>
<dbReference type="EMBL" id="AK040888">
    <property type="protein sequence ID" value="BAC30733.1"/>
    <property type="status" value="ALT_INIT"/>
    <property type="molecule type" value="mRNA"/>
</dbReference>
<dbReference type="EMBL" id="AK046670">
    <property type="protein sequence ID" value="BAC32830.1"/>
    <property type="status" value="ALT_INIT"/>
    <property type="molecule type" value="mRNA"/>
</dbReference>
<dbReference type="EMBL" id="AK047044">
    <property type="protein sequence ID" value="BAC32946.1"/>
    <property type="molecule type" value="mRNA"/>
</dbReference>
<dbReference type="EMBL" id="AK053606">
    <property type="protein sequence ID" value="BAC35444.1"/>
    <property type="molecule type" value="mRNA"/>
</dbReference>
<dbReference type="EMBL" id="BC052212">
    <property type="protein sequence ID" value="AAH52212.1"/>
    <property type="molecule type" value="mRNA"/>
</dbReference>
<dbReference type="EMBL" id="BC145689">
    <property type="protein sequence ID" value="AAI45690.1"/>
    <property type="molecule type" value="mRNA"/>
</dbReference>
<dbReference type="CCDS" id="CCDS49621.1">
    <molecule id="Q8CCJ9-6"/>
</dbReference>
<dbReference type="RefSeq" id="NP_001074878.1">
    <molecule id="Q8CCJ9-6"/>
    <property type="nucleotide sequence ID" value="NM_001081409.2"/>
</dbReference>
<dbReference type="RefSeq" id="NP_001405829.1">
    <molecule id="Q8CCJ9-2"/>
    <property type="nucleotide sequence ID" value="NM_001418900.1"/>
</dbReference>
<dbReference type="RefSeq" id="NP_001405830.1">
    <molecule id="Q8CCJ9-2"/>
    <property type="nucleotide sequence ID" value="NM_001418901.1"/>
</dbReference>
<dbReference type="RefSeq" id="XP_030104405.1">
    <molecule id="Q8CCJ9-6"/>
    <property type="nucleotide sequence ID" value="XM_030248545.2"/>
</dbReference>
<dbReference type="SMR" id="Q8CCJ9"/>
<dbReference type="BioGRID" id="232090">
    <property type="interactions" value="4"/>
</dbReference>
<dbReference type="FunCoup" id="Q8CCJ9">
    <property type="interactions" value="1473"/>
</dbReference>
<dbReference type="STRING" id="10090.ENSMUSP00000155487"/>
<dbReference type="iPTMnet" id="Q8CCJ9"/>
<dbReference type="PhosphoSitePlus" id="Q8CCJ9"/>
<dbReference type="jPOST" id="Q8CCJ9"/>
<dbReference type="PaxDb" id="10090-ENSMUSP00000035682"/>
<dbReference type="PeptideAtlas" id="Q8CCJ9"/>
<dbReference type="ProteomicsDB" id="294280">
    <molecule id="Q8CCJ9-6"/>
</dbReference>
<dbReference type="ProteomicsDB" id="294281">
    <molecule id="Q8CCJ9-1"/>
</dbReference>
<dbReference type="ProteomicsDB" id="294282">
    <molecule id="Q8CCJ9-2"/>
</dbReference>
<dbReference type="ProteomicsDB" id="294283">
    <molecule id="Q8CCJ9-3"/>
</dbReference>
<dbReference type="ProteomicsDB" id="294284">
    <molecule id="Q8CCJ9-4"/>
</dbReference>
<dbReference type="ProteomicsDB" id="294285">
    <molecule id="Q8CCJ9-5"/>
</dbReference>
<dbReference type="ProteomicsDB" id="294286">
    <molecule id="Q8CCJ9-7"/>
</dbReference>
<dbReference type="ProteomicsDB" id="294287">
    <molecule id="Q8CCJ9-8"/>
</dbReference>
<dbReference type="Antibodypedia" id="27384">
    <property type="antibodies" value="142 antibodies from 17 providers"/>
</dbReference>
<dbReference type="Ensembl" id="ENSMUST00000229160.2">
    <molecule id="Q8CCJ9-6"/>
    <property type="protein sequence ID" value="ENSMUSP00000155487.2"/>
    <property type="gene ID" value="ENSMUSG00000072501.6"/>
</dbReference>
<dbReference type="Ensembl" id="ENSMUST00000230882.2">
    <molecule id="Q8CCJ9-2"/>
    <property type="protein sequence ID" value="ENSMUSP00000155575.2"/>
    <property type="gene ID" value="ENSMUSG00000072501.6"/>
</dbReference>
<dbReference type="GeneID" id="239510"/>
<dbReference type="KEGG" id="mmu:239510"/>
<dbReference type="UCSC" id="uc007wae.1">
    <molecule id="Q8CCJ9-2"/>
    <property type="organism name" value="mouse"/>
</dbReference>
<dbReference type="UCSC" id="uc007wag.1">
    <molecule id="Q8CCJ9-6"/>
    <property type="organism name" value="mouse"/>
</dbReference>
<dbReference type="UCSC" id="uc007wah.1">
    <molecule id="Q8CCJ9-1"/>
    <property type="organism name" value="mouse"/>
</dbReference>
<dbReference type="UCSC" id="uc007wak.1">
    <molecule id="Q8CCJ9-3"/>
    <property type="organism name" value="mouse"/>
</dbReference>
<dbReference type="UCSC" id="uc007wan.1">
    <molecule id="Q8CCJ9-8"/>
    <property type="organism name" value="mouse"/>
</dbReference>
<dbReference type="UCSC" id="uc007wao.1">
    <molecule id="Q8CCJ9-7"/>
    <property type="organism name" value="mouse"/>
</dbReference>
<dbReference type="AGR" id="MGI:2444412"/>
<dbReference type="CTD" id="51105"/>
<dbReference type="MGI" id="MGI:2444412">
    <property type="gene designation" value="Phf20l1"/>
</dbReference>
<dbReference type="VEuPathDB" id="HostDB:ENSMUSG00000072501"/>
<dbReference type="eggNOG" id="KOG1844">
    <property type="taxonomic scope" value="Eukaryota"/>
</dbReference>
<dbReference type="GeneTree" id="ENSGT00940000156215"/>
<dbReference type="HOGENOM" id="CLU_012707_0_0_1"/>
<dbReference type="InParanoid" id="Q8CCJ9"/>
<dbReference type="OrthoDB" id="161570at2759"/>
<dbReference type="PhylomeDB" id="Q8CCJ9"/>
<dbReference type="TreeFam" id="TF106475"/>
<dbReference type="Reactome" id="R-MMU-9772755">
    <property type="pathway name" value="Formation of WDR5-containing histone-modifying complexes"/>
</dbReference>
<dbReference type="BioGRID-ORCS" id="239510">
    <property type="hits" value="3 hits in 79 CRISPR screens"/>
</dbReference>
<dbReference type="ChiTaRS" id="Phf20l1">
    <property type="organism name" value="mouse"/>
</dbReference>
<dbReference type="PRO" id="PR:Q8CCJ9"/>
<dbReference type="Proteomes" id="UP000000589">
    <property type="component" value="Chromosome 15"/>
</dbReference>
<dbReference type="RNAct" id="Q8CCJ9">
    <property type="molecule type" value="protein"/>
</dbReference>
<dbReference type="Bgee" id="ENSMUSG00000072501">
    <property type="expression patterns" value="Expressed in rostral migratory stream and 252 other cell types or tissues"/>
</dbReference>
<dbReference type="ExpressionAtlas" id="Q8CCJ9">
    <property type="expression patterns" value="baseline and differential"/>
</dbReference>
<dbReference type="GO" id="GO:0005634">
    <property type="term" value="C:nucleus"/>
    <property type="evidence" value="ECO:0007669"/>
    <property type="project" value="UniProtKB-SubCell"/>
</dbReference>
<dbReference type="GO" id="GO:0140034">
    <property type="term" value="F:methylation-dependent protein binding"/>
    <property type="evidence" value="ECO:0007669"/>
    <property type="project" value="UniProtKB-ARBA"/>
</dbReference>
<dbReference type="GO" id="GO:0008270">
    <property type="term" value="F:zinc ion binding"/>
    <property type="evidence" value="ECO:0007669"/>
    <property type="project" value="UniProtKB-KW"/>
</dbReference>
<dbReference type="GO" id="GO:0032435">
    <property type="term" value="P:negative regulation of proteasomal ubiquitin-dependent protein catabolic process"/>
    <property type="evidence" value="ECO:0000250"/>
    <property type="project" value="UniProtKB"/>
</dbReference>
<dbReference type="CDD" id="cd20104">
    <property type="entry name" value="MBT_PHF20L1-like"/>
    <property type="match status" value="1"/>
</dbReference>
<dbReference type="CDD" id="cd15633">
    <property type="entry name" value="PHD_PHF20L1"/>
    <property type="match status" value="1"/>
</dbReference>
<dbReference type="CDD" id="cd20454">
    <property type="entry name" value="Tudor_PHF20L1"/>
    <property type="match status" value="1"/>
</dbReference>
<dbReference type="FunFam" id="2.30.30.140:FF:000049">
    <property type="entry name" value="PHD finger protein 20 (Predicted)"/>
    <property type="match status" value="1"/>
</dbReference>
<dbReference type="Gene3D" id="2.30.30.140">
    <property type="match status" value="2"/>
</dbReference>
<dbReference type="Gene3D" id="3.30.40.10">
    <property type="entry name" value="Zinc/RING finger domain, C3HC4 (zinc finger)"/>
    <property type="match status" value="1"/>
</dbReference>
<dbReference type="InterPro" id="IPR014002">
    <property type="entry name" value="Agenet_dom_plant"/>
</dbReference>
<dbReference type="InterPro" id="IPR040477">
    <property type="entry name" value="KDM4-like_Tudor"/>
</dbReference>
<dbReference type="InterPro" id="IPR043449">
    <property type="entry name" value="PHF20-like"/>
</dbReference>
<dbReference type="InterPro" id="IPR002999">
    <property type="entry name" value="Tudor"/>
</dbReference>
<dbReference type="InterPro" id="IPR047405">
    <property type="entry name" value="Tudor_PHF20L1"/>
</dbReference>
<dbReference type="InterPro" id="IPR019786">
    <property type="entry name" value="Zinc_finger_PHD-type_CS"/>
</dbReference>
<dbReference type="InterPro" id="IPR011011">
    <property type="entry name" value="Znf_FYVE_PHD"/>
</dbReference>
<dbReference type="InterPro" id="IPR013083">
    <property type="entry name" value="Znf_RING/FYVE/PHD"/>
</dbReference>
<dbReference type="PANTHER" id="PTHR15856:SF26">
    <property type="entry name" value="PHD FINGER PROTEIN 20-LIKE PROTEIN 1"/>
    <property type="match status" value="1"/>
</dbReference>
<dbReference type="PANTHER" id="PTHR15856">
    <property type="entry name" value="PHD FINGER PROTEIN 20-RELATED"/>
    <property type="match status" value="1"/>
</dbReference>
<dbReference type="Pfam" id="PF16660">
    <property type="entry name" value="PHD20L1_u1"/>
    <property type="match status" value="1"/>
</dbReference>
<dbReference type="Pfam" id="PF20826">
    <property type="entry name" value="PHD_5"/>
    <property type="match status" value="1"/>
</dbReference>
<dbReference type="Pfam" id="PF18104">
    <property type="entry name" value="Tudor_2"/>
    <property type="match status" value="1"/>
</dbReference>
<dbReference type="SMART" id="SM00743">
    <property type="entry name" value="Agenet"/>
    <property type="match status" value="2"/>
</dbReference>
<dbReference type="SMART" id="SM00333">
    <property type="entry name" value="TUDOR"/>
    <property type="match status" value="2"/>
</dbReference>
<dbReference type="SUPFAM" id="SSF57903">
    <property type="entry name" value="FYVE/PHD zinc finger"/>
    <property type="match status" value="1"/>
</dbReference>
<dbReference type="SUPFAM" id="SSF63748">
    <property type="entry name" value="Tudor/PWWP/MBT"/>
    <property type="match status" value="2"/>
</dbReference>
<dbReference type="PROSITE" id="PS01359">
    <property type="entry name" value="ZF_PHD_1"/>
    <property type="match status" value="1"/>
</dbReference>
<organism>
    <name type="scientific">Mus musculus</name>
    <name type="common">Mouse</name>
    <dbReference type="NCBI Taxonomy" id="10090"/>
    <lineage>
        <taxon>Eukaryota</taxon>
        <taxon>Metazoa</taxon>
        <taxon>Chordata</taxon>
        <taxon>Craniata</taxon>
        <taxon>Vertebrata</taxon>
        <taxon>Euteleostomi</taxon>
        <taxon>Mammalia</taxon>
        <taxon>Eutheria</taxon>
        <taxon>Euarchontoglires</taxon>
        <taxon>Glires</taxon>
        <taxon>Rodentia</taxon>
        <taxon>Myomorpha</taxon>
        <taxon>Muroidea</taxon>
        <taxon>Muridae</taxon>
        <taxon>Murinae</taxon>
        <taxon>Mus</taxon>
        <taxon>Mus</taxon>
    </lineage>
</organism>